<proteinExistence type="evidence at protein level"/>
<dbReference type="EMBL" id="AK033158">
    <property type="protein sequence ID" value="BAC28176.1"/>
    <property type="status" value="ALT_FRAME"/>
    <property type="molecule type" value="mRNA"/>
</dbReference>
<dbReference type="EMBL" id="AK149082">
    <property type="protein sequence ID" value="BAE28732.1"/>
    <property type="status" value="ALT_INIT"/>
    <property type="molecule type" value="mRNA"/>
</dbReference>
<dbReference type="EMBL" id="AC099590">
    <property type="status" value="NOT_ANNOTATED_CDS"/>
    <property type="molecule type" value="Genomic_DNA"/>
</dbReference>
<dbReference type="EMBL" id="AC101593">
    <property type="status" value="NOT_ANNOTATED_CDS"/>
    <property type="molecule type" value="Genomic_DNA"/>
</dbReference>
<dbReference type="EMBL" id="AC121957">
    <property type="status" value="NOT_ANNOTATED_CDS"/>
    <property type="molecule type" value="Genomic_DNA"/>
</dbReference>
<dbReference type="EMBL" id="AC122852">
    <property type="status" value="NOT_ANNOTATED_CDS"/>
    <property type="molecule type" value="Genomic_DNA"/>
</dbReference>
<dbReference type="EMBL" id="CH466528">
    <property type="protein sequence ID" value="EDL09992.1"/>
    <property type="status" value="ALT_SEQ"/>
    <property type="molecule type" value="Genomic_DNA"/>
</dbReference>
<dbReference type="EMBL" id="AY123778">
    <property type="protein sequence ID" value="AAM88568.1"/>
    <property type="status" value="ALT_INIT"/>
    <property type="molecule type" value="mRNA"/>
</dbReference>
<dbReference type="EMBL" id="BC125475">
    <property type="protein sequence ID" value="AAI25476.1"/>
    <property type="status" value="ALT_INIT"/>
    <property type="molecule type" value="mRNA"/>
</dbReference>
<dbReference type="EMBL" id="BC137656">
    <property type="protein sequence ID" value="AAI37657.1"/>
    <property type="status" value="ALT_INIT"/>
    <property type="molecule type" value="mRNA"/>
</dbReference>
<dbReference type="EMBL" id="AF357240">
    <property type="protein sequence ID" value="AAK48901.1"/>
    <property type="molecule type" value="mRNA"/>
</dbReference>
<dbReference type="EMBL" id="AF533008">
    <property type="protein sequence ID" value="AAQ10283.1"/>
    <property type="molecule type" value="mRNA"/>
</dbReference>
<dbReference type="RefSeq" id="NP_001299834.1">
    <property type="nucleotide sequence ID" value="NM_001312905.1"/>
</dbReference>
<dbReference type="RefSeq" id="NP_536713.1">
    <property type="nucleotide sequence ID" value="NM_080465.2"/>
</dbReference>
<dbReference type="BMRB" id="P58390"/>
<dbReference type="SMR" id="P58390"/>
<dbReference type="BioGRID" id="228265">
    <property type="interactions" value="1"/>
</dbReference>
<dbReference type="FunCoup" id="P58390">
    <property type="interactions" value="402"/>
</dbReference>
<dbReference type="STRING" id="10090.ENSMUSP00000139350"/>
<dbReference type="GuidetoPHARMACOLOGY" id="382"/>
<dbReference type="GlyGen" id="P58390">
    <property type="glycosylation" value="3 sites, 1 N-linked glycan (1 site), 1 O-linked glycan (2 sites)"/>
</dbReference>
<dbReference type="iPTMnet" id="P58390"/>
<dbReference type="PhosphoSitePlus" id="P58390"/>
<dbReference type="jPOST" id="P58390"/>
<dbReference type="PaxDb" id="10090-ENSMUSP00000067884"/>
<dbReference type="ProteomicsDB" id="269205"/>
<dbReference type="ABCD" id="P58390">
    <property type="antibodies" value="1 sequenced antibody"/>
</dbReference>
<dbReference type="Antibodypedia" id="13591">
    <property type="antibodies" value="129 antibodies from 30 providers"/>
</dbReference>
<dbReference type="DNASU" id="140492"/>
<dbReference type="GeneID" id="140492"/>
<dbReference type="KEGG" id="mmu:140492"/>
<dbReference type="UCSC" id="uc008evd.1">
    <property type="organism name" value="mouse"/>
</dbReference>
<dbReference type="AGR" id="MGI:2153182"/>
<dbReference type="CTD" id="3781"/>
<dbReference type="MGI" id="MGI:2153182">
    <property type="gene designation" value="Kcnn2"/>
</dbReference>
<dbReference type="VEuPathDB" id="HostDB:ENSMUSG00000054477"/>
<dbReference type="eggNOG" id="KOG3684">
    <property type="taxonomic scope" value="Eukaryota"/>
</dbReference>
<dbReference type="InParanoid" id="P58390"/>
<dbReference type="PhylomeDB" id="P58390"/>
<dbReference type="TreeFam" id="TF315015"/>
<dbReference type="Reactome" id="R-MMU-1296052">
    <property type="pathway name" value="Ca2+ activated K+ channels"/>
</dbReference>
<dbReference type="BioGRID-ORCS" id="140492">
    <property type="hits" value="1 hit in 38 CRISPR screens"/>
</dbReference>
<dbReference type="ChiTaRS" id="Kcnn2">
    <property type="organism name" value="mouse"/>
</dbReference>
<dbReference type="PRO" id="PR:P58390"/>
<dbReference type="Proteomes" id="UP000000589">
    <property type="component" value="Chromosome 18"/>
</dbReference>
<dbReference type="RNAct" id="P58390">
    <property type="molecule type" value="protein"/>
</dbReference>
<dbReference type="Bgee" id="ENSMUSG00000054477">
    <property type="expression patterns" value="Expressed in adrenal gland and 186 other cell types or tissues"/>
</dbReference>
<dbReference type="ExpressionAtlas" id="P58390">
    <property type="expression patterns" value="baseline and differential"/>
</dbReference>
<dbReference type="GO" id="GO:0043197">
    <property type="term" value="C:dendritic spine"/>
    <property type="evidence" value="ECO:0000314"/>
    <property type="project" value="MGI"/>
</dbReference>
<dbReference type="GO" id="GO:0098978">
    <property type="term" value="C:glutamatergic synapse"/>
    <property type="evidence" value="ECO:0000314"/>
    <property type="project" value="SynGO"/>
</dbReference>
<dbReference type="GO" id="GO:0005886">
    <property type="term" value="C:plasma membrane"/>
    <property type="evidence" value="ECO:0000314"/>
    <property type="project" value="MGI"/>
</dbReference>
<dbReference type="GO" id="GO:0045211">
    <property type="term" value="C:postsynaptic membrane"/>
    <property type="evidence" value="ECO:0000314"/>
    <property type="project" value="SynGO"/>
</dbReference>
<dbReference type="GO" id="GO:0042383">
    <property type="term" value="C:sarcolemma"/>
    <property type="evidence" value="ECO:0000314"/>
    <property type="project" value="UniProtKB"/>
</dbReference>
<dbReference type="GO" id="GO:0005790">
    <property type="term" value="C:smooth endoplasmic reticulum"/>
    <property type="evidence" value="ECO:0000314"/>
    <property type="project" value="MGI"/>
</dbReference>
<dbReference type="GO" id="GO:0030315">
    <property type="term" value="C:T-tubule"/>
    <property type="evidence" value="ECO:0000314"/>
    <property type="project" value="BHF-UCL"/>
</dbReference>
<dbReference type="GO" id="GO:0030018">
    <property type="term" value="C:Z disc"/>
    <property type="evidence" value="ECO:0000314"/>
    <property type="project" value="UniProtKB"/>
</dbReference>
<dbReference type="GO" id="GO:0005516">
    <property type="term" value="F:calmodulin binding"/>
    <property type="evidence" value="ECO:0007669"/>
    <property type="project" value="UniProtKB-KW"/>
</dbReference>
<dbReference type="GO" id="GO:0005216">
    <property type="term" value="F:monoatomic ion channel activity"/>
    <property type="evidence" value="ECO:0000314"/>
    <property type="project" value="MGI"/>
</dbReference>
<dbReference type="GO" id="GO:0016286">
    <property type="term" value="F:small conductance calcium-activated potassium channel activity"/>
    <property type="evidence" value="ECO:0000314"/>
    <property type="project" value="UniProtKB"/>
</dbReference>
<dbReference type="GO" id="GO:0098914">
    <property type="term" value="P:membrane repolarization during atrial cardiac muscle cell action potential"/>
    <property type="evidence" value="ECO:0000315"/>
    <property type="project" value="BHF-UCL"/>
</dbReference>
<dbReference type="GO" id="GO:0050804">
    <property type="term" value="P:modulation of chemical synaptic transmission"/>
    <property type="evidence" value="ECO:0000314"/>
    <property type="project" value="SynGO"/>
</dbReference>
<dbReference type="GO" id="GO:0006811">
    <property type="term" value="P:monoatomic ion transport"/>
    <property type="evidence" value="ECO:0000314"/>
    <property type="project" value="MGI"/>
</dbReference>
<dbReference type="GO" id="GO:0071805">
    <property type="term" value="P:potassium ion transmembrane transport"/>
    <property type="evidence" value="ECO:0000315"/>
    <property type="project" value="BHF-UCL"/>
</dbReference>
<dbReference type="GO" id="GO:0006813">
    <property type="term" value="P:potassium ion transport"/>
    <property type="evidence" value="ECO:0000304"/>
    <property type="project" value="UniProtKB"/>
</dbReference>
<dbReference type="FunFam" id="1.10.287.70:FF:000022">
    <property type="entry name" value="Small conductance calcium-activated potassium channel, isoform O"/>
    <property type="match status" value="1"/>
</dbReference>
<dbReference type="FunFam" id="1.10.287.70:FF:000027">
    <property type="entry name" value="Small conductance calcium-activated potassium channel, isoform O"/>
    <property type="match status" value="1"/>
</dbReference>
<dbReference type="Gene3D" id="1.10.287.70">
    <property type="match status" value="2"/>
</dbReference>
<dbReference type="InterPro" id="IPR004178">
    <property type="entry name" value="CaM-bd_dom"/>
</dbReference>
<dbReference type="InterPro" id="IPR036122">
    <property type="entry name" value="CaM-bd_dom_sf"/>
</dbReference>
<dbReference type="InterPro" id="IPR015449">
    <property type="entry name" value="K_chnl_Ca-activ_SK"/>
</dbReference>
<dbReference type="InterPro" id="IPR013099">
    <property type="entry name" value="K_chnl_dom"/>
</dbReference>
<dbReference type="PANTHER" id="PTHR10153">
    <property type="entry name" value="SMALL CONDUCTANCE CALCIUM-ACTIVATED POTASSIUM CHANNEL"/>
    <property type="match status" value="1"/>
</dbReference>
<dbReference type="Pfam" id="PF02888">
    <property type="entry name" value="CaMBD"/>
    <property type="match status" value="1"/>
</dbReference>
<dbReference type="Pfam" id="PF07885">
    <property type="entry name" value="Ion_trans_2"/>
    <property type="match status" value="1"/>
</dbReference>
<dbReference type="Pfam" id="PF03530">
    <property type="entry name" value="SK_channel"/>
    <property type="match status" value="1"/>
</dbReference>
<dbReference type="PRINTS" id="PR01451">
    <property type="entry name" value="SKCHANNEL"/>
</dbReference>
<dbReference type="SMART" id="SM01053">
    <property type="entry name" value="CaMBD"/>
    <property type="match status" value="1"/>
</dbReference>
<dbReference type="SUPFAM" id="SSF81327">
    <property type="entry name" value="Small-conductance potassium channel"/>
    <property type="match status" value="1"/>
</dbReference>
<dbReference type="SUPFAM" id="SSF81324">
    <property type="entry name" value="Voltage-gated potassium channels"/>
    <property type="match status" value="1"/>
</dbReference>
<keyword id="KW-0112">Calmodulin-binding</keyword>
<keyword id="KW-0963">Cytoplasm</keyword>
<keyword id="KW-0407">Ion channel</keyword>
<keyword id="KW-0406">Ion transport</keyword>
<keyword id="KW-0472">Membrane</keyword>
<keyword id="KW-0597">Phosphoprotein</keyword>
<keyword id="KW-1185">Reference proteome</keyword>
<keyword id="KW-0812">Transmembrane</keyword>
<keyword id="KW-1133">Transmembrane helix</keyword>
<keyword id="KW-0813">Transport</keyword>
<name>KCNN2_MOUSE</name>
<comment type="function">
    <text evidence="2 3 6 7 8">Small conductance calcium-activated potassium channel that mediates the voltage-independent transmembrane transfer of potassium across the cell membrane through a constitutive interaction with calmodulin which binds the intracellular calcium allowing its opening (PubMed:11557517, PubMed:13679367, PubMed:14657188). The current is characterized by a voltage-independent activation, an intracellular calcium concentration increase-dependent activation and a single-channel conductance of about 3 picosiemens (PubMed:14657188). Also presents an inwardly rectifying current, thus reducing its already small outward conductance of potassium ions, which is particularly the case when the membrane potential displays positive values, above + 20 mV (PubMed:13679367). The inward rectification could be due to a blockade of the outward current by intracellular divalent cations such as calcium and magnesium and could also be due to an intrinsic property of the channel pore, independent of intracellular divalent ions. There are three positively charged amino acids in the S6 transmembrane domain, close to the pore, that collectively control the conductance and rectification through an electrostatic mechanism. Additionally, electrostatic contributions from these residues also play an important role in determining the intrinsic open probability of the channel in the absence of calcium, affecting the apparent calcium affinity for activation. Forms an heteromeric complex with calmodulin, which is constitutively associated in a calcium-independent manner. Channel opening is triggered when calcium binds the calmodulin resulting in a rotary movement leading to the formation of the dimeric complex to open the gate (By similarity). Plays a role in the repolarization phase of cardiac action potential (By similarity).</text>
</comment>
<comment type="catalytic activity">
    <reaction evidence="6 7 8">
        <text>K(+)(in) = K(+)(out)</text>
        <dbReference type="Rhea" id="RHEA:29463"/>
        <dbReference type="ChEBI" id="CHEBI:29103"/>
    </reaction>
</comment>
<comment type="activity regulation">
    <text evidence="2 6 7 8">Inhibited by bee venom neurotoxin apamin (PubMed:11557517, PubMed:13679367, PubMed:14657188). Inhibited by UCL 1684 and tetraethylammonium (TEA) (By similarity).</text>
</comment>
<comment type="subunit">
    <text evidence="2 10 11">Homodimer (PubMed:20689065). Heteromultimer with KCNN1 and KCNN3 (PubMed:20689065). The complex is composed of 4 channel subunits each of which binds to a calmodulin subunit which regulates the channel activity through calcium-binding (By similarity). Interacts (via N-terminal domain) with MPP2 (PubMed:26880549).</text>
</comment>
<comment type="subcellular location">
    <subcellularLocation>
        <location evidence="4">Membrane</location>
        <topology evidence="4">Multi-pass membrane protein</topology>
    </subcellularLocation>
    <subcellularLocation>
        <location evidence="10">Cytoplasm</location>
        <location evidence="10">Myofibril</location>
        <location evidence="10">Sarcomere</location>
        <location evidence="10">Z line</location>
    </subcellularLocation>
</comment>
<comment type="tissue specificity">
    <text evidence="6 7 9 10">Expressed in atrial and ventricular myocytes with higher levels in atrial myocytes (at protein level) (PubMed:13679367, PubMed:16055520, PubMed:20689065). Highly expressed in brain, liver and colon with low levels in kidney and testis (PubMed:11557517). In colon, detected in smooth muscle cells (PubMed:11557517).</text>
</comment>
<comment type="domain">
    <text evidence="2">The calmodulin-binding domain (CaMBD) forms an elongated dimer with a calmodulin molecule bound at each end; each calmodulin wraps around three alpha-helices, two from one CaMBD subunit and one from the other.</text>
</comment>
<comment type="domain">
    <text evidence="3">The coiled-coil domaim mediates heteromeic assembly.</text>
</comment>
<comment type="similarity">
    <text evidence="12">Belongs to the potassium channel KCNN family. KCa2.2/KCNN2 subfamily.</text>
</comment>
<comment type="sequence caution" evidence="12">
    <conflict type="erroneous initiation">
        <sequence resource="EMBL-CDS" id="AAI25476"/>
    </conflict>
    <text>Truncated N-terminus.</text>
</comment>
<comment type="sequence caution" evidence="12">
    <conflict type="erroneous initiation">
        <sequence resource="EMBL-CDS" id="AAI37657"/>
    </conflict>
    <text>Truncated N-terminus.</text>
</comment>
<comment type="sequence caution" evidence="12">
    <conflict type="erroneous initiation">
        <sequence resource="EMBL-CDS" id="AAM88568"/>
    </conflict>
    <text>Truncated N-terminus.</text>
</comment>
<comment type="sequence caution" evidence="12">
    <conflict type="frameshift">
        <sequence resource="EMBL-CDS" id="BAC28176"/>
    </conflict>
</comment>
<comment type="sequence caution" evidence="12">
    <conflict type="erroneous initiation">
        <sequence resource="EMBL-CDS" id="BAE28732"/>
    </conflict>
    <text>Truncated N-terminus.</text>
</comment>
<comment type="sequence caution" evidence="12">
    <conflict type="erroneous gene model prediction">
        <sequence resource="EMBL-CDS" id="EDL09992"/>
    </conflict>
</comment>
<feature type="chain" id="PRO_0000155011" description="Small conductance calcium-activated potassium channel protein 2">
    <location>
        <begin position="1"/>
        <end position="839"/>
    </location>
</feature>
<feature type="transmembrane region" description="Helical; Name=Segment S1" evidence="4">
    <location>
        <begin position="398"/>
        <end position="418"/>
    </location>
</feature>
<feature type="transmembrane region" description="Helical; Name=Segment S2" evidence="4">
    <location>
        <begin position="428"/>
        <end position="448"/>
    </location>
</feature>
<feature type="transmembrane region" description="Helical; Name=Segment S3" evidence="4">
    <location>
        <begin position="474"/>
        <end position="494"/>
    </location>
</feature>
<feature type="transmembrane region" description="Helical; Name=Segment S4" evidence="4">
    <location>
        <begin position="516"/>
        <end position="536"/>
    </location>
</feature>
<feature type="transmembrane region" description="Helical; Name=Segment S5" evidence="4">
    <location>
        <begin position="565"/>
        <end position="585"/>
    </location>
</feature>
<feature type="intramembrane region" description="Pore-forming; Name=Segment H5" evidence="4">
    <location>
        <begin position="605"/>
        <end position="625"/>
    </location>
</feature>
<feature type="transmembrane region" description="Helical; Name=Segment S6" evidence="4">
    <location>
        <begin position="634"/>
        <end position="654"/>
    </location>
</feature>
<feature type="region of interest" description="Disordered" evidence="5">
    <location>
        <begin position="1"/>
        <end position="33"/>
    </location>
</feature>
<feature type="region of interest" description="Disordered" evidence="5">
    <location>
        <begin position="64"/>
        <end position="115"/>
    </location>
</feature>
<feature type="region of interest" description="Disordered" evidence="5">
    <location>
        <begin position="195"/>
        <end position="258"/>
    </location>
</feature>
<feature type="region of interest" description="Disordered" evidence="5">
    <location>
        <begin position="280"/>
        <end position="375"/>
    </location>
</feature>
<feature type="region of interest" description="Calmodulin-binding" evidence="1">
    <location>
        <begin position="672"/>
        <end position="748"/>
    </location>
</feature>
<feature type="region of interest" description="Disordered" evidence="5">
    <location>
        <begin position="810"/>
        <end position="839"/>
    </location>
</feature>
<feature type="compositionally biased region" description="Low complexity" evidence="5">
    <location>
        <begin position="198"/>
        <end position="212"/>
    </location>
</feature>
<feature type="compositionally biased region" description="Low complexity" evidence="5">
    <location>
        <begin position="219"/>
        <end position="235"/>
    </location>
</feature>
<feature type="compositionally biased region" description="Basic residues" evidence="5">
    <location>
        <begin position="236"/>
        <end position="253"/>
    </location>
</feature>
<feature type="compositionally biased region" description="Low complexity" evidence="5">
    <location>
        <begin position="313"/>
        <end position="326"/>
    </location>
</feature>
<feature type="compositionally biased region" description="Gly residues" evidence="5">
    <location>
        <begin position="345"/>
        <end position="363"/>
    </location>
</feature>
<feature type="compositionally biased region" description="Basic and acidic residues" evidence="5">
    <location>
        <begin position="810"/>
        <end position="819"/>
    </location>
</feature>
<feature type="compositionally biased region" description="Low complexity" evidence="5">
    <location>
        <begin position="828"/>
        <end position="839"/>
    </location>
</feature>
<feature type="modified residue" description="Phosphotyrosine" evidence="2">
    <location>
        <position position="420"/>
    </location>
</feature>
<feature type="sequence conflict" description="In Ref. 1; BAC28176." evidence="12" ref="1">
    <original>Q</original>
    <variation>K</variation>
    <location>
        <position position="87"/>
    </location>
</feature>
<feature type="sequence conflict" description="In Ref. 1; BAC28176." evidence="12" ref="1">
    <original>S</original>
    <variation>R</variation>
    <location>
        <position position="119"/>
    </location>
</feature>
<feature type="sequence conflict" description="In Ref. 1; BAC28176." evidence="12" ref="1">
    <original>D</original>
    <variation>N</variation>
    <location>
        <position position="542"/>
    </location>
</feature>
<sequence length="839" mass="91604">MPIVLVRPTNRTRRLDSTGAGMGPSSHQQQESPLPTITHCAGCTTAWSPCSFNSSDMETPLQFQRGFFPEQPPPPPRSSHLHCQQQQQSQDKPCAPFAPLPHPHHHPHLAHQQPGSGGSSPCLRCNSCASSGAPAAGAGAGDNLSLLLRTSSPGGAFRTRTSSPLSGSSCCCCCSSRRGSQLNVSELTPSSHASALRQQYAQQPASASQYHQCHSLQPATSPTGSLGSLGSGPPLSHHHHHPHPAHHQHHQPQARRESNPFTEIAMSSCRYNGGVMRPLSNLSSSRRNLQEMDSEAQPLQPPASVVGGGGGASSPSAAAAASSSAPEIVVSKPEHNNSNNLALYGTGGGGSTGGGGGGSGHGSSSGTKSSKKKNQNIGYKLGHRRALFEKRKRLSDYALIFGMFGIVVMVIETELSWGAYDKASLYSLALKCLISLSTIILLGLIIVYHAREIQLFMVDNGADDWRIAMTYERIFFICLEILVCAIHPIPGNYTFTWTARLAFSYAPSTTTADVDIILSIPMFLRLYLIARVMLLHSKLFTDASSRSIGALNKINFNTRFVMKTLMTICPGTVLLVFSISLWIIAAWTVRACERYHDQQDVTSNFLGAMWLISITFLSIGYGDMVPNTYCGKGVCLLTGIMGAGCTALVVAVVARKLELTKAEKHVHNFMMDTQLTKRVKNAAANVLRETWLIYKNTKLVKKIDHAKVRKHQRKFLQAIHQLRSVKMEQRKLNDQANTLVDLAKTQNIMYDMISDLNERSEDFEKRIVTLETKLETLIGSIHALPGLISQTIRQQQRDFIETQMENYDKHVSYNAERSRSSSRRRRSSSTAPPTSSESS</sequence>
<gene>
    <name evidence="13" type="primary">Kcnn2</name>
    <name type="synonym">Sk2</name>
</gene>
<evidence type="ECO:0000250" key="1"/>
<evidence type="ECO:0000250" key="2">
    <source>
        <dbReference type="UniProtKB" id="P70604"/>
    </source>
</evidence>
<evidence type="ECO:0000250" key="3">
    <source>
        <dbReference type="UniProtKB" id="Q9H2S1"/>
    </source>
</evidence>
<evidence type="ECO:0000255" key="4"/>
<evidence type="ECO:0000256" key="5">
    <source>
        <dbReference type="SAM" id="MobiDB-lite"/>
    </source>
</evidence>
<evidence type="ECO:0000269" key="6">
    <source>
    </source>
</evidence>
<evidence type="ECO:0000269" key="7">
    <source>
    </source>
</evidence>
<evidence type="ECO:0000269" key="8">
    <source>
    </source>
</evidence>
<evidence type="ECO:0000269" key="9">
    <source>
    </source>
</evidence>
<evidence type="ECO:0000269" key="10">
    <source>
    </source>
</evidence>
<evidence type="ECO:0000269" key="11">
    <source>
    </source>
</evidence>
<evidence type="ECO:0000305" key="12"/>
<evidence type="ECO:0000312" key="13">
    <source>
        <dbReference type="MGI" id="MGI:2153182"/>
    </source>
</evidence>
<reference key="1">
    <citation type="journal article" date="2005" name="Science">
        <title>The transcriptional landscape of the mammalian genome.</title>
        <authorList>
            <person name="Carninci P."/>
            <person name="Kasukawa T."/>
            <person name="Katayama S."/>
            <person name="Gough J."/>
            <person name="Frith M.C."/>
            <person name="Maeda N."/>
            <person name="Oyama R."/>
            <person name="Ravasi T."/>
            <person name="Lenhard B."/>
            <person name="Wells C."/>
            <person name="Kodzius R."/>
            <person name="Shimokawa K."/>
            <person name="Bajic V.B."/>
            <person name="Brenner S.E."/>
            <person name="Batalov S."/>
            <person name="Forrest A.R."/>
            <person name="Zavolan M."/>
            <person name="Davis M.J."/>
            <person name="Wilming L.G."/>
            <person name="Aidinis V."/>
            <person name="Allen J.E."/>
            <person name="Ambesi-Impiombato A."/>
            <person name="Apweiler R."/>
            <person name="Aturaliya R.N."/>
            <person name="Bailey T.L."/>
            <person name="Bansal M."/>
            <person name="Baxter L."/>
            <person name="Beisel K.W."/>
            <person name="Bersano T."/>
            <person name="Bono H."/>
            <person name="Chalk A.M."/>
            <person name="Chiu K.P."/>
            <person name="Choudhary V."/>
            <person name="Christoffels A."/>
            <person name="Clutterbuck D.R."/>
            <person name="Crowe M.L."/>
            <person name="Dalla E."/>
            <person name="Dalrymple B.P."/>
            <person name="de Bono B."/>
            <person name="Della Gatta G."/>
            <person name="di Bernardo D."/>
            <person name="Down T."/>
            <person name="Engstrom P."/>
            <person name="Fagiolini M."/>
            <person name="Faulkner G."/>
            <person name="Fletcher C.F."/>
            <person name="Fukushima T."/>
            <person name="Furuno M."/>
            <person name="Futaki S."/>
            <person name="Gariboldi M."/>
            <person name="Georgii-Hemming P."/>
            <person name="Gingeras T.R."/>
            <person name="Gojobori T."/>
            <person name="Green R.E."/>
            <person name="Gustincich S."/>
            <person name="Harbers M."/>
            <person name="Hayashi Y."/>
            <person name="Hensch T.K."/>
            <person name="Hirokawa N."/>
            <person name="Hill D."/>
            <person name="Huminiecki L."/>
            <person name="Iacono M."/>
            <person name="Ikeo K."/>
            <person name="Iwama A."/>
            <person name="Ishikawa T."/>
            <person name="Jakt M."/>
            <person name="Kanapin A."/>
            <person name="Katoh M."/>
            <person name="Kawasawa Y."/>
            <person name="Kelso J."/>
            <person name="Kitamura H."/>
            <person name="Kitano H."/>
            <person name="Kollias G."/>
            <person name="Krishnan S.P."/>
            <person name="Kruger A."/>
            <person name="Kummerfeld S.K."/>
            <person name="Kurochkin I.V."/>
            <person name="Lareau L.F."/>
            <person name="Lazarevic D."/>
            <person name="Lipovich L."/>
            <person name="Liu J."/>
            <person name="Liuni S."/>
            <person name="McWilliam S."/>
            <person name="Madan Babu M."/>
            <person name="Madera M."/>
            <person name="Marchionni L."/>
            <person name="Matsuda H."/>
            <person name="Matsuzawa S."/>
            <person name="Miki H."/>
            <person name="Mignone F."/>
            <person name="Miyake S."/>
            <person name="Morris K."/>
            <person name="Mottagui-Tabar S."/>
            <person name="Mulder N."/>
            <person name="Nakano N."/>
            <person name="Nakauchi H."/>
            <person name="Ng P."/>
            <person name="Nilsson R."/>
            <person name="Nishiguchi S."/>
            <person name="Nishikawa S."/>
            <person name="Nori F."/>
            <person name="Ohara O."/>
            <person name="Okazaki Y."/>
            <person name="Orlando V."/>
            <person name="Pang K.C."/>
            <person name="Pavan W.J."/>
            <person name="Pavesi G."/>
            <person name="Pesole G."/>
            <person name="Petrovsky N."/>
            <person name="Piazza S."/>
            <person name="Reed J."/>
            <person name="Reid J.F."/>
            <person name="Ring B.Z."/>
            <person name="Ringwald M."/>
            <person name="Rost B."/>
            <person name="Ruan Y."/>
            <person name="Salzberg S.L."/>
            <person name="Sandelin A."/>
            <person name="Schneider C."/>
            <person name="Schoenbach C."/>
            <person name="Sekiguchi K."/>
            <person name="Semple C.A."/>
            <person name="Seno S."/>
            <person name="Sessa L."/>
            <person name="Sheng Y."/>
            <person name="Shibata Y."/>
            <person name="Shimada H."/>
            <person name="Shimada K."/>
            <person name="Silva D."/>
            <person name="Sinclair B."/>
            <person name="Sperling S."/>
            <person name="Stupka E."/>
            <person name="Sugiura K."/>
            <person name="Sultana R."/>
            <person name="Takenaka Y."/>
            <person name="Taki K."/>
            <person name="Tammoja K."/>
            <person name="Tan S.L."/>
            <person name="Tang S."/>
            <person name="Taylor M.S."/>
            <person name="Tegner J."/>
            <person name="Teichmann S.A."/>
            <person name="Ueda H.R."/>
            <person name="van Nimwegen E."/>
            <person name="Verardo R."/>
            <person name="Wei C.L."/>
            <person name="Yagi K."/>
            <person name="Yamanishi H."/>
            <person name="Zabarovsky E."/>
            <person name="Zhu S."/>
            <person name="Zimmer A."/>
            <person name="Hide W."/>
            <person name="Bult C."/>
            <person name="Grimmond S.M."/>
            <person name="Teasdale R.D."/>
            <person name="Liu E.T."/>
            <person name="Brusic V."/>
            <person name="Quackenbush J."/>
            <person name="Wahlestedt C."/>
            <person name="Mattick J.S."/>
            <person name="Hume D.A."/>
            <person name="Kai C."/>
            <person name="Sasaki D."/>
            <person name="Tomaru Y."/>
            <person name="Fukuda S."/>
            <person name="Kanamori-Katayama M."/>
            <person name="Suzuki M."/>
            <person name="Aoki J."/>
            <person name="Arakawa T."/>
            <person name="Iida J."/>
            <person name="Imamura K."/>
            <person name="Itoh M."/>
            <person name="Kato T."/>
            <person name="Kawaji H."/>
            <person name="Kawagashira N."/>
            <person name="Kawashima T."/>
            <person name="Kojima M."/>
            <person name="Kondo S."/>
            <person name="Konno H."/>
            <person name="Nakano K."/>
            <person name="Ninomiya N."/>
            <person name="Nishio T."/>
            <person name="Okada M."/>
            <person name="Plessy C."/>
            <person name="Shibata K."/>
            <person name="Shiraki T."/>
            <person name="Suzuki S."/>
            <person name="Tagami M."/>
            <person name="Waki K."/>
            <person name="Watahiki A."/>
            <person name="Okamura-Oho Y."/>
            <person name="Suzuki H."/>
            <person name="Kawai J."/>
            <person name="Hayashizaki Y."/>
        </authorList>
    </citation>
    <scope>NUCLEOTIDE SEQUENCE [LARGE SCALE MRNA]</scope>
    <source>
        <strain>C57BL/6J</strain>
        <tissue>Sympathetic ganglion</tissue>
        <tissue>Testis</tissue>
    </source>
</reference>
<reference key="2">
    <citation type="journal article" date="2009" name="PLoS Biol.">
        <title>Lineage-specific biology revealed by a finished genome assembly of the mouse.</title>
        <authorList>
            <person name="Church D.M."/>
            <person name="Goodstadt L."/>
            <person name="Hillier L.W."/>
            <person name="Zody M.C."/>
            <person name="Goldstein S."/>
            <person name="She X."/>
            <person name="Bult C.J."/>
            <person name="Agarwala R."/>
            <person name="Cherry J.L."/>
            <person name="DiCuccio M."/>
            <person name="Hlavina W."/>
            <person name="Kapustin Y."/>
            <person name="Meric P."/>
            <person name="Maglott D."/>
            <person name="Birtle Z."/>
            <person name="Marques A.C."/>
            <person name="Graves T."/>
            <person name="Zhou S."/>
            <person name="Teague B."/>
            <person name="Potamousis K."/>
            <person name="Churas C."/>
            <person name="Place M."/>
            <person name="Herschleb J."/>
            <person name="Runnheim R."/>
            <person name="Forrest D."/>
            <person name="Amos-Landgraf J."/>
            <person name="Schwartz D.C."/>
            <person name="Cheng Z."/>
            <person name="Lindblad-Toh K."/>
            <person name="Eichler E.E."/>
            <person name="Ponting C.P."/>
        </authorList>
    </citation>
    <scope>NUCLEOTIDE SEQUENCE [LARGE SCALE GENOMIC DNA]</scope>
    <source>
        <strain>C57BL/6J</strain>
    </source>
</reference>
<reference key="3">
    <citation type="submission" date="2005-09" db="EMBL/GenBank/DDBJ databases">
        <authorList>
            <person name="Mural R.J."/>
            <person name="Adams M.D."/>
            <person name="Myers E.W."/>
            <person name="Smith H.O."/>
            <person name="Venter J.C."/>
        </authorList>
    </citation>
    <scope>NUCLEOTIDE SEQUENCE [LARGE SCALE GENOMIC DNA]</scope>
</reference>
<reference key="4">
    <citation type="journal article" date="2004" name="J. Neurophysiol.">
        <title>Cloning and expression of a small-conductance Ca(2+)-activated K+ channel from the mouse cochlea: coexpression with alpha9/alpha10 acetylcholine receptors.</title>
        <authorList>
            <person name="Nie L."/>
            <person name="Song H."/>
            <person name="Chen M.F."/>
            <person name="Chiamvimonvat N."/>
            <person name="Beisel K.W."/>
            <person name="Yamoah E.N."/>
            <person name="Vazquez A.E."/>
        </authorList>
    </citation>
    <scope>NUCLEOTIDE SEQUENCE [MRNA] OF 241-839</scope>
    <scope>FUNCTION</scope>
    <scope>TRANSPORTER ACTIVITY</scope>
    <scope>ACTIVITY REGULATION</scope>
    <source>
        <strain>C3H/HeJ</strain>
        <tissue>Cochlea</tissue>
    </source>
</reference>
<reference key="5">
    <citation type="journal article" date="2004" name="Genome Res.">
        <title>The status, quality, and expansion of the NIH full-length cDNA project: the Mammalian Gene Collection (MGC).</title>
        <authorList>
            <consortium name="The MGC Project Team"/>
        </authorList>
    </citation>
    <scope>NUCLEOTIDE SEQUENCE [LARGE SCALE MRNA] OF 258-839</scope>
    <source>
        <tissue>Brain</tissue>
    </source>
</reference>
<reference key="6">
    <citation type="journal article" date="2001" name="Am. J. Physiol.">
        <title>Molecular properties of small-conductance Ca2+-activated K+ channels expressed in murine colonic smooth muscle.</title>
        <authorList>
            <person name="Ro S."/>
            <person name="Hatton W.J."/>
            <person name="Koh S.D."/>
            <person name="Horowitz B."/>
        </authorList>
    </citation>
    <scope>NUCLEOTIDE SEQUENCE [MRNA] OF 266-839</scope>
    <scope>FUNCTION</scope>
    <scope>TRANSPORTER ACTIVITY</scope>
    <scope>ACTIVITY REGULATION</scope>
    <scope>TISSUE SPECIFICITY</scope>
    <source>
        <strain>BALB/cJ</strain>
        <tissue>Colon</tissue>
    </source>
</reference>
<reference key="7">
    <citation type="journal article" date="2003" name="J. Biol. Chem.">
        <title>Molecular identification and functional roles of a Ca(2+)-activated K+ channel in human and mouse hearts.</title>
        <authorList>
            <person name="Xu Y."/>
            <person name="Tuteja D."/>
            <person name="Zhang Z."/>
            <person name="Xu D."/>
            <person name="Zhang Y."/>
            <person name="Rodriguez J."/>
            <person name="Nie L."/>
            <person name="Tuxson H.R."/>
            <person name="Young J.N."/>
            <person name="Glatter K.A."/>
            <person name="Vazquez A.E."/>
            <person name="Yamoah E.N."/>
            <person name="Chiamvimonvat N."/>
        </authorList>
    </citation>
    <scope>NUCLEOTIDE SEQUENCE [MRNA] OF 266-839</scope>
    <scope>FUNCTION</scope>
    <scope>TRANSPORTER ACTIVITY</scope>
    <scope>ACTIVITY REGULATION</scope>
    <scope>TISSUE SPECIFICITY</scope>
    <source>
        <strain>CD-1</strain>
        <tissue>Heart</tissue>
    </source>
</reference>
<reference key="8">
    <citation type="journal article" date="2005" name="Am. J. Physiol.">
        <title>Differential expression of small-conductance Ca2+-activated K+ channels SK1, SK2, and SK3 in mouse atrial and ventricular myocytes.</title>
        <authorList>
            <person name="Tuteja D."/>
            <person name="Xu D."/>
            <person name="Timofeyev V."/>
            <person name="Lu L."/>
            <person name="Sharma D."/>
            <person name="Zhang Z."/>
            <person name="Xu Y."/>
            <person name="Nie L."/>
            <person name="Vazquez A.E."/>
            <person name="Young J.N."/>
            <person name="Glatter K.A."/>
            <person name="Chiamvimonvat N."/>
        </authorList>
    </citation>
    <scope>TISSUE SPECIFICITY</scope>
</reference>
<reference key="9">
    <citation type="journal article" date="2010" name="Cell">
        <title>A tissue-specific atlas of mouse protein phosphorylation and expression.</title>
        <authorList>
            <person name="Huttlin E.L."/>
            <person name="Jedrychowski M.P."/>
            <person name="Elias J.E."/>
            <person name="Goswami T."/>
            <person name="Rad R."/>
            <person name="Beausoleil S.A."/>
            <person name="Villen J."/>
            <person name="Haas W."/>
            <person name="Sowa M.E."/>
            <person name="Gygi S.P."/>
        </authorList>
    </citation>
    <scope>IDENTIFICATION BY MASS SPECTROMETRY [LARGE SCALE ANALYSIS]</scope>
    <source>
        <tissue>Brain</tissue>
    </source>
</reference>
<reference key="10">
    <citation type="journal article" date="2010" name="Circ. Res.">
        <title>Cardiac small conductance Ca2+-activated K+ channel subunits form heteromultimers via the coiled-coil domains in the C termini of the channels.</title>
        <authorList>
            <person name="Tuteja D."/>
            <person name="Rafizadeh S."/>
            <person name="Timofeyev V."/>
            <person name="Wang S."/>
            <person name="Zhang Z."/>
            <person name="Li N."/>
            <person name="Mateo R.K."/>
            <person name="Singapuri A."/>
            <person name="Young J.N."/>
            <person name="Knowlton A.A."/>
            <person name="Chiamvimonvat N."/>
        </authorList>
    </citation>
    <scope>SUBUNIT</scope>
    <scope>SUBCELLULAR LOCATION</scope>
    <scope>TISSUE SPECIFICITY</scope>
</reference>
<reference key="11">
    <citation type="journal article" date="2016" name="Elife">
        <title>Membrane palmitoylated protein 2 is a synaptic scaffold protein required for synaptic SK2-containing channel function.</title>
        <authorList>
            <person name="Kim G."/>
            <person name="Lujan R."/>
            <person name="Schwenk J."/>
            <person name="Kelley M.H."/>
            <person name="Aguado C."/>
            <person name="Watanabe M."/>
            <person name="Fakler B."/>
            <person name="Maylie J."/>
            <person name="Adelman J.P."/>
        </authorList>
    </citation>
    <scope>INTERACTION WITH MPP2</scope>
</reference>
<protein>
    <recommendedName>
        <fullName evidence="12">Small conductance calcium-activated potassium channel protein 2</fullName>
        <shortName>SK2</shortName>
        <shortName>SKCa 2</shortName>
        <shortName>SKCa2</shortName>
    </recommendedName>
    <alternativeName>
        <fullName>KCa2.2</fullName>
    </alternativeName>
</protein>
<organism>
    <name type="scientific">Mus musculus</name>
    <name type="common">Mouse</name>
    <dbReference type="NCBI Taxonomy" id="10090"/>
    <lineage>
        <taxon>Eukaryota</taxon>
        <taxon>Metazoa</taxon>
        <taxon>Chordata</taxon>
        <taxon>Craniata</taxon>
        <taxon>Vertebrata</taxon>
        <taxon>Euteleostomi</taxon>
        <taxon>Mammalia</taxon>
        <taxon>Eutheria</taxon>
        <taxon>Euarchontoglires</taxon>
        <taxon>Glires</taxon>
        <taxon>Rodentia</taxon>
        <taxon>Myomorpha</taxon>
        <taxon>Muroidea</taxon>
        <taxon>Muridae</taxon>
        <taxon>Murinae</taxon>
        <taxon>Mus</taxon>
        <taxon>Mus</taxon>
    </lineage>
</organism>
<accession>P58390</accession>
<accession>E9QNY5</accession>
<accession>Q3UF29</accession>
<accession>Q540U9</accession>
<accession>Q8CCH4</accession>